<feature type="chain" id="PRO_1000202511" description="Imidazoleglycerol-phosphate dehydratase">
    <location>
        <begin position="1"/>
        <end position="196"/>
    </location>
</feature>
<gene>
    <name evidence="1" type="primary">hisB</name>
    <name type="ordered locus">DMR_22370</name>
</gene>
<keyword id="KW-0028">Amino-acid biosynthesis</keyword>
<keyword id="KW-0963">Cytoplasm</keyword>
<keyword id="KW-0368">Histidine biosynthesis</keyword>
<keyword id="KW-0456">Lyase</keyword>
<name>HIS7_SOLM1</name>
<organism>
    <name type="scientific">Solidesulfovibrio magneticus (strain ATCC 700980 / DSM 13731 / RS-1)</name>
    <name type="common">Desulfovibrio magneticus</name>
    <dbReference type="NCBI Taxonomy" id="573370"/>
    <lineage>
        <taxon>Bacteria</taxon>
        <taxon>Pseudomonadati</taxon>
        <taxon>Thermodesulfobacteriota</taxon>
        <taxon>Desulfovibrionia</taxon>
        <taxon>Desulfovibrionales</taxon>
        <taxon>Desulfovibrionaceae</taxon>
        <taxon>Solidesulfovibrio</taxon>
    </lineage>
</organism>
<accession>C4XSN6</accession>
<evidence type="ECO:0000255" key="1">
    <source>
        <dbReference type="HAMAP-Rule" id="MF_00076"/>
    </source>
</evidence>
<protein>
    <recommendedName>
        <fullName evidence="1">Imidazoleglycerol-phosphate dehydratase</fullName>
        <shortName evidence="1">IGPD</shortName>
        <ecNumber evidence="1">4.2.1.19</ecNumber>
    </recommendedName>
</protein>
<proteinExistence type="inferred from homology"/>
<dbReference type="EC" id="4.2.1.19" evidence="1"/>
<dbReference type="EMBL" id="AP010904">
    <property type="protein sequence ID" value="BAH75728.1"/>
    <property type="molecule type" value="Genomic_DNA"/>
</dbReference>
<dbReference type="RefSeq" id="WP_015860911.1">
    <property type="nucleotide sequence ID" value="NC_012796.1"/>
</dbReference>
<dbReference type="SMR" id="C4XSN6"/>
<dbReference type="STRING" id="573370.DMR_22370"/>
<dbReference type="KEGG" id="dma:DMR_22370"/>
<dbReference type="eggNOG" id="COG0131">
    <property type="taxonomic scope" value="Bacteria"/>
</dbReference>
<dbReference type="HOGENOM" id="CLU_044308_3_0_7"/>
<dbReference type="OrthoDB" id="9790411at2"/>
<dbReference type="UniPathway" id="UPA00031">
    <property type="reaction ID" value="UER00011"/>
</dbReference>
<dbReference type="Proteomes" id="UP000009071">
    <property type="component" value="Chromosome"/>
</dbReference>
<dbReference type="GO" id="GO:0005737">
    <property type="term" value="C:cytoplasm"/>
    <property type="evidence" value="ECO:0007669"/>
    <property type="project" value="UniProtKB-SubCell"/>
</dbReference>
<dbReference type="GO" id="GO:0004424">
    <property type="term" value="F:imidazoleglycerol-phosphate dehydratase activity"/>
    <property type="evidence" value="ECO:0007669"/>
    <property type="project" value="UniProtKB-UniRule"/>
</dbReference>
<dbReference type="GO" id="GO:0000105">
    <property type="term" value="P:L-histidine biosynthetic process"/>
    <property type="evidence" value="ECO:0007669"/>
    <property type="project" value="UniProtKB-UniRule"/>
</dbReference>
<dbReference type="CDD" id="cd07914">
    <property type="entry name" value="IGPD"/>
    <property type="match status" value="1"/>
</dbReference>
<dbReference type="FunFam" id="3.30.230.40:FF:000001">
    <property type="entry name" value="Imidazoleglycerol-phosphate dehydratase HisB"/>
    <property type="match status" value="1"/>
</dbReference>
<dbReference type="FunFam" id="3.30.230.40:FF:000003">
    <property type="entry name" value="Imidazoleglycerol-phosphate dehydratase HisB"/>
    <property type="match status" value="1"/>
</dbReference>
<dbReference type="Gene3D" id="3.30.230.40">
    <property type="entry name" value="Imidazole glycerol phosphate dehydratase, domain 1"/>
    <property type="match status" value="2"/>
</dbReference>
<dbReference type="HAMAP" id="MF_00076">
    <property type="entry name" value="HisB"/>
    <property type="match status" value="1"/>
</dbReference>
<dbReference type="InterPro" id="IPR038494">
    <property type="entry name" value="IGPD_sf"/>
</dbReference>
<dbReference type="InterPro" id="IPR000807">
    <property type="entry name" value="ImidazoleglycerolP_deHydtase"/>
</dbReference>
<dbReference type="InterPro" id="IPR020565">
    <property type="entry name" value="ImidazoleglycerP_deHydtase_CS"/>
</dbReference>
<dbReference type="InterPro" id="IPR020568">
    <property type="entry name" value="Ribosomal_Su5_D2-typ_SF"/>
</dbReference>
<dbReference type="NCBIfam" id="NF002111">
    <property type="entry name" value="PRK00951.2-1"/>
    <property type="match status" value="1"/>
</dbReference>
<dbReference type="NCBIfam" id="NF002114">
    <property type="entry name" value="PRK00951.2-4"/>
    <property type="match status" value="1"/>
</dbReference>
<dbReference type="PANTHER" id="PTHR23133:SF2">
    <property type="entry name" value="IMIDAZOLEGLYCEROL-PHOSPHATE DEHYDRATASE"/>
    <property type="match status" value="1"/>
</dbReference>
<dbReference type="PANTHER" id="PTHR23133">
    <property type="entry name" value="IMIDAZOLEGLYCEROL-PHOSPHATE DEHYDRATASE HIS7"/>
    <property type="match status" value="1"/>
</dbReference>
<dbReference type="Pfam" id="PF00475">
    <property type="entry name" value="IGPD"/>
    <property type="match status" value="1"/>
</dbReference>
<dbReference type="SUPFAM" id="SSF54211">
    <property type="entry name" value="Ribosomal protein S5 domain 2-like"/>
    <property type="match status" value="2"/>
</dbReference>
<dbReference type="PROSITE" id="PS00954">
    <property type="entry name" value="IGP_DEHYDRATASE_1"/>
    <property type="match status" value="1"/>
</dbReference>
<dbReference type="PROSITE" id="PS00955">
    <property type="entry name" value="IGP_DEHYDRATASE_2"/>
    <property type="match status" value="1"/>
</dbReference>
<comment type="catalytic activity">
    <reaction evidence="1">
        <text>D-erythro-1-(imidazol-4-yl)glycerol 3-phosphate = 3-(imidazol-4-yl)-2-oxopropyl phosphate + H2O</text>
        <dbReference type="Rhea" id="RHEA:11040"/>
        <dbReference type="ChEBI" id="CHEBI:15377"/>
        <dbReference type="ChEBI" id="CHEBI:57766"/>
        <dbReference type="ChEBI" id="CHEBI:58278"/>
        <dbReference type="EC" id="4.2.1.19"/>
    </reaction>
</comment>
<comment type="pathway">
    <text evidence="1">Amino-acid biosynthesis; L-histidine biosynthesis; L-histidine from 5-phospho-alpha-D-ribose 1-diphosphate: step 6/9.</text>
</comment>
<comment type="subcellular location">
    <subcellularLocation>
        <location evidence="1">Cytoplasm</location>
    </subcellularLocation>
</comment>
<comment type="similarity">
    <text evidence="1">Belongs to the imidazoleglycerol-phosphate dehydratase family.</text>
</comment>
<sequence length="196" mass="21452">MAKRFGAYSRETGETRVAVEITIDGKGNAAIDTGFGFADHMLNLLAFWAGFDLNLTCRGDLEVDAHHTLEDVAICLGEAFRQALGERVGIERVGDARVPMDEALCDVVVDLSGRPYLVYREDVLPPVIAGEEKDLWREFFKSLAISARMNLHIHFVYGQNGHHLVEAAFKALGLALRRATAAHGSSRVPSTKGSLD</sequence>
<reference key="1">
    <citation type="journal article" date="2009" name="Genome Res.">
        <title>Whole genome sequence of Desulfovibrio magneticus strain RS-1 revealed common gene clusters in magnetotactic bacteria.</title>
        <authorList>
            <person name="Nakazawa H."/>
            <person name="Arakaki A."/>
            <person name="Narita-Yamada S."/>
            <person name="Yashiro I."/>
            <person name="Jinno K."/>
            <person name="Aoki N."/>
            <person name="Tsuruyama A."/>
            <person name="Okamura Y."/>
            <person name="Tanikawa S."/>
            <person name="Fujita N."/>
            <person name="Takeyama H."/>
            <person name="Matsunaga T."/>
        </authorList>
    </citation>
    <scope>NUCLEOTIDE SEQUENCE [LARGE SCALE GENOMIC DNA]</scope>
    <source>
        <strain>ATCC 700980 / DSM 13731 / RS-1</strain>
    </source>
</reference>